<reference key="1">
    <citation type="journal article" date="1995" name="Eur. J. Biochem.">
        <title>The primary structure of Hyphomicrobium X dimethylamine dehydrogenase. Relationship to trimethylamine dehydrogenase and implications for substrate recognition.</title>
        <authorList>
            <person name="Yang C.C."/>
            <person name="Packman L.C."/>
            <person name="Scrutton N.S."/>
        </authorList>
    </citation>
    <scope>NUCLEOTIDE SEQUENCE [GENOMIC DNA]</scope>
</reference>
<dbReference type="EC" id="1.5.8.1"/>
<dbReference type="EMBL" id="X89575">
    <property type="protein sequence ID" value="CAA61752.1"/>
    <property type="molecule type" value="Genomic_DNA"/>
</dbReference>
<dbReference type="SMR" id="Q48303"/>
<dbReference type="BioCyc" id="MetaCyc:MONOMER-16115"/>
<dbReference type="GO" id="GO:0051539">
    <property type="term" value="F:4 iron, 4 sulfur cluster binding"/>
    <property type="evidence" value="ECO:0007669"/>
    <property type="project" value="UniProtKB-KW"/>
</dbReference>
<dbReference type="GO" id="GO:0047133">
    <property type="term" value="F:dimethylamine dehydrogenase activity"/>
    <property type="evidence" value="ECO:0007669"/>
    <property type="project" value="UniProtKB-EC"/>
</dbReference>
<dbReference type="GO" id="GO:0010181">
    <property type="term" value="F:FMN binding"/>
    <property type="evidence" value="ECO:0007669"/>
    <property type="project" value="InterPro"/>
</dbReference>
<dbReference type="GO" id="GO:0046872">
    <property type="term" value="F:metal ion binding"/>
    <property type="evidence" value="ECO:0007669"/>
    <property type="project" value="UniProtKB-KW"/>
</dbReference>
<dbReference type="GO" id="GO:0009056">
    <property type="term" value="P:catabolic process"/>
    <property type="evidence" value="ECO:0007669"/>
    <property type="project" value="UniProtKB-ARBA"/>
</dbReference>
<dbReference type="CDD" id="cd02929">
    <property type="entry name" value="TMADH_HD_FMN"/>
    <property type="match status" value="1"/>
</dbReference>
<dbReference type="Gene3D" id="3.20.20.70">
    <property type="entry name" value="Aldolase class I"/>
    <property type="match status" value="1"/>
</dbReference>
<dbReference type="Gene3D" id="3.50.50.60">
    <property type="entry name" value="FAD/NAD(P)-binding domain"/>
    <property type="match status" value="1"/>
</dbReference>
<dbReference type="Gene3D" id="3.40.50.720">
    <property type="entry name" value="NAD(P)-binding Rossmann-like Domain"/>
    <property type="match status" value="1"/>
</dbReference>
<dbReference type="InterPro" id="IPR013785">
    <property type="entry name" value="Aldolase_TIM"/>
</dbReference>
<dbReference type="InterPro" id="IPR036188">
    <property type="entry name" value="FAD/NAD-bd_sf"/>
</dbReference>
<dbReference type="InterPro" id="IPR051793">
    <property type="entry name" value="NADH:flavin_oxidoreductase"/>
</dbReference>
<dbReference type="InterPro" id="IPR001155">
    <property type="entry name" value="OxRdtase_FMN_N"/>
</dbReference>
<dbReference type="InterPro" id="IPR054428">
    <property type="entry name" value="TMADH/DMDH/HD_second_a-b"/>
</dbReference>
<dbReference type="InterPro" id="IPR037348">
    <property type="entry name" value="TMADH/DMDH_FMN-bd"/>
</dbReference>
<dbReference type="PANTHER" id="PTHR42917">
    <property type="entry name" value="2,4-DIENOYL-COA REDUCTASE"/>
    <property type="match status" value="1"/>
</dbReference>
<dbReference type="PANTHER" id="PTHR42917:SF2">
    <property type="entry name" value="2,4-DIENOYL-COA REDUCTASE [(2E)-ENOYL-COA-PRODUCING]"/>
    <property type="match status" value="1"/>
</dbReference>
<dbReference type="Pfam" id="PF13450">
    <property type="entry name" value="NAD_binding_8"/>
    <property type="match status" value="1"/>
</dbReference>
<dbReference type="Pfam" id="PF00724">
    <property type="entry name" value="Oxidored_FMN"/>
    <property type="match status" value="1"/>
</dbReference>
<dbReference type="Pfam" id="PF22620">
    <property type="entry name" value="OYE-like_second_a-b"/>
    <property type="match status" value="1"/>
</dbReference>
<dbReference type="PRINTS" id="PR00368">
    <property type="entry name" value="FADPNR"/>
</dbReference>
<dbReference type="PRINTS" id="PR00411">
    <property type="entry name" value="PNDRDTASEI"/>
</dbReference>
<dbReference type="SUPFAM" id="SSF51395">
    <property type="entry name" value="FMN-linked oxidoreductases"/>
    <property type="match status" value="1"/>
</dbReference>
<dbReference type="SUPFAM" id="SSF51971">
    <property type="entry name" value="Nucleotide-binding domain"/>
    <property type="match status" value="1"/>
</dbReference>
<accession>Q48303</accession>
<comment type="catalytic activity">
    <reaction>
        <text>dimethylamine + oxidized [electron-transfer flavoprotein] + H2O + H(+) = methylamine + reduced [electron-transfer flavoprotein] + formaldehyde</text>
        <dbReference type="Rhea" id="RHEA:10204"/>
        <dbReference type="Rhea" id="RHEA-COMP:10685"/>
        <dbReference type="Rhea" id="RHEA-COMP:10686"/>
        <dbReference type="ChEBI" id="CHEBI:15377"/>
        <dbReference type="ChEBI" id="CHEBI:15378"/>
        <dbReference type="ChEBI" id="CHEBI:16842"/>
        <dbReference type="ChEBI" id="CHEBI:57692"/>
        <dbReference type="ChEBI" id="CHEBI:58040"/>
        <dbReference type="ChEBI" id="CHEBI:58307"/>
        <dbReference type="ChEBI" id="CHEBI:59338"/>
        <dbReference type="EC" id="1.5.8.1"/>
    </reaction>
</comment>
<comment type="cofactor">
    <cofactor evidence="1">
        <name>FMN</name>
        <dbReference type="ChEBI" id="CHEBI:58210"/>
    </cofactor>
    <text evidence="1">Binds 1 FMN covalently per subunit.</text>
</comment>
<comment type="cofactor">
    <cofactor evidence="1">
        <name>[4Fe-4S] cluster</name>
        <dbReference type="ChEBI" id="CHEBI:49883"/>
    </cofactor>
    <text evidence="1">Binds 1 [4Fe-4S] cluster per subunit.</text>
</comment>
<comment type="similarity">
    <text evidence="2">In the N-terminal section; belongs to the NADH:flavin oxidoreductase/NADH oxidase family.</text>
</comment>
<organism>
    <name type="scientific">Hyphomicrobium sp. (strain x)</name>
    <dbReference type="NCBI Taxonomy" id="79673"/>
    <lineage>
        <taxon>Bacteria</taxon>
        <taxon>Pseudomonadati</taxon>
        <taxon>Pseudomonadota</taxon>
        <taxon>Alphaproteobacteria</taxon>
        <taxon>Hyphomicrobiales</taxon>
        <taxon>Hyphomicrobiaceae</taxon>
        <taxon>Hyphomicrobium</taxon>
    </lineage>
</organism>
<feature type="initiator methionine" description="Removed" evidence="1">
    <location>
        <position position="1"/>
    </location>
</feature>
<feature type="chain" id="PRO_0000194471" description="Dimethylamine dehydrogenase">
    <location>
        <begin position="2"/>
        <end position="736"/>
    </location>
</feature>
<feature type="active site" description="Proton donor" evidence="1">
    <location>
        <position position="181"/>
    </location>
</feature>
<feature type="binding site" evidence="1">
    <location>
        <begin position="176"/>
        <end position="179"/>
    </location>
    <ligand>
        <name>substrate</name>
    </ligand>
</feature>
<feature type="binding site" evidence="1">
    <location>
        <position position="229"/>
    </location>
    <ligand>
        <name>FMN</name>
        <dbReference type="ChEBI" id="CHEBI:58210"/>
    </ligand>
</feature>
<feature type="binding site" evidence="1">
    <location>
        <position position="329"/>
    </location>
    <ligand>
        <name>FMN</name>
        <dbReference type="ChEBI" id="CHEBI:58210"/>
    </ligand>
</feature>
<feature type="binding site" evidence="1">
    <location>
        <position position="352"/>
    </location>
    <ligand>
        <name>[4Fe-4S] cluster</name>
        <dbReference type="ChEBI" id="CHEBI:49883"/>
    </ligand>
</feature>
<feature type="binding site" evidence="1">
    <location>
        <position position="355"/>
    </location>
    <ligand>
        <name>[4Fe-4S] cluster</name>
        <dbReference type="ChEBI" id="CHEBI:49883"/>
    </ligand>
</feature>
<feature type="binding site" evidence="1">
    <location>
        <position position="358"/>
    </location>
    <ligand>
        <name>[4Fe-4S] cluster</name>
        <dbReference type="ChEBI" id="CHEBI:49883"/>
    </ligand>
</feature>
<feature type="binding site" evidence="1">
    <location>
        <position position="371"/>
    </location>
    <ligand>
        <name>[4Fe-4S] cluster</name>
        <dbReference type="ChEBI" id="CHEBI:49883"/>
    </ligand>
</feature>
<feature type="binding site" evidence="1">
    <location>
        <begin position="398"/>
        <end position="427"/>
    </location>
    <ligand>
        <name>ADP</name>
        <dbReference type="ChEBI" id="CHEBI:456216"/>
    </ligand>
</feature>
<feature type="modified residue" description="S-6-FMN cysteine" evidence="1">
    <location>
        <position position="31"/>
    </location>
</feature>
<evidence type="ECO:0000250" key="1"/>
<evidence type="ECO:0000305" key="2"/>
<name>DHDM_HYPSX</name>
<keyword id="KW-0004">4Fe-4S</keyword>
<keyword id="KW-0285">Flavoprotein</keyword>
<keyword id="KW-0288">FMN</keyword>
<keyword id="KW-0408">Iron</keyword>
<keyword id="KW-0411">Iron-sulfur</keyword>
<keyword id="KW-0479">Metal-binding</keyword>
<keyword id="KW-0560">Oxidoreductase</keyword>
<sequence length="736" mass="82655">MARDPRFDILFTPLKLGSKTIRNRFYQVPHCNGAGTNSPGMNMAHRGIKAEGGWGAVNTEQCSIHPECDDTLRITARIWDQGDMRNLRAMVDHVHSHGSLAGCELFYGGPHAPAIESRTISRGPSQYNSEFATVPGCPGFTYNHEADIDELERLQQQYVDAALRARDTGFDLVNVYGAHAYGPMQWLNPYYNRRTDKYGGSFDNRARFWIETLEKIRRAVNDDVALVTRCATDTLYGTKGVELTEDGLRFIELASPYLDLWDVNIGDIAEWGEDAGPSRFYPIAHENDWIRHIKQATNKPVVGVGRYYDPEKMLQVIKAGIIDIIGAARPSIADPWLPRKIDEGRVDDIRTCIGCNVCISRWEMGGVPFICTQNATAGEEYRRGWHPEKFEPKKSDHDVLIVGAGPAGSECARVLMERGYTVHLVDTREKTGGYVNDVATLPGLGEWSFHRDYRQTQLEKLLKKNPECQIALKQKPMTADDILQYGASRVVIATGAKWSTTGVNHRTHEPIPGADASLPHVLTPEQVYEGKKAVGKRVMIINYDAYYTAPSLAEKFARAGHDVTVATVCGLGAYMEYTLEGANMQRLIHELGIKVLGETGCSRVEQGRVELFNIWGEGYKRSYKGAGQLPRNENTSHEWHECDTVILVTSRRSEDTLYRELKARKGEWEANGITNVFVIGDAESPRIIADATFDGHRLAREIEDADPQHQKPYKREQRAWGTAYNPDENPDLVWRV</sequence>
<proteinExistence type="inferred from homology"/>
<protein>
    <recommendedName>
        <fullName>Dimethylamine dehydrogenase</fullName>
        <shortName>DMADh</shortName>
        <ecNumber>1.5.8.1</ecNumber>
    </recommendedName>
</protein>
<gene>
    <name type="primary">dmd</name>
</gene>